<feature type="chain" id="PRO_0000251284" description="Large ribosomal subunit protein uL18">
    <location>
        <begin position="1"/>
        <end position="120"/>
    </location>
</feature>
<feature type="region of interest" description="Disordered" evidence="2">
    <location>
        <begin position="1"/>
        <end position="26"/>
    </location>
</feature>
<feature type="compositionally biased region" description="Basic residues" evidence="2">
    <location>
        <begin position="8"/>
        <end position="18"/>
    </location>
</feature>
<accession>Q3MFA6</accession>
<name>RL18_TRIV2</name>
<reference key="1">
    <citation type="journal article" date="2014" name="Stand. Genomic Sci.">
        <title>Complete genome sequence of Anabaena variabilis ATCC 29413.</title>
        <authorList>
            <person name="Thiel T."/>
            <person name="Pratte B.S."/>
            <person name="Zhong J."/>
            <person name="Goodwin L."/>
            <person name="Copeland A."/>
            <person name="Lucas S."/>
            <person name="Han C."/>
            <person name="Pitluck S."/>
            <person name="Land M.L."/>
            <person name="Kyrpides N.C."/>
            <person name="Woyke T."/>
        </authorList>
    </citation>
    <scope>NUCLEOTIDE SEQUENCE [LARGE SCALE GENOMIC DNA]</scope>
    <source>
        <strain>ATCC 29413 / PCC 7937</strain>
    </source>
</reference>
<proteinExistence type="inferred from homology"/>
<comment type="function">
    <text evidence="1">This is one of the proteins that bind and probably mediate the attachment of the 5S RNA into the large ribosomal subunit, where it forms part of the central protuberance.</text>
</comment>
<comment type="subunit">
    <text evidence="1">Part of the 50S ribosomal subunit; part of the 5S rRNA/L5/L18/L25 subcomplex. Contacts the 5S and 23S rRNAs.</text>
</comment>
<comment type="similarity">
    <text evidence="1">Belongs to the universal ribosomal protein uL18 family.</text>
</comment>
<keyword id="KW-0687">Ribonucleoprotein</keyword>
<keyword id="KW-0689">Ribosomal protein</keyword>
<keyword id="KW-0694">RNA-binding</keyword>
<keyword id="KW-0699">rRNA-binding</keyword>
<dbReference type="EMBL" id="CP000117">
    <property type="protein sequence ID" value="ABA20330.1"/>
    <property type="molecule type" value="Genomic_DNA"/>
</dbReference>
<dbReference type="SMR" id="Q3MFA6"/>
<dbReference type="STRING" id="240292.Ava_0706"/>
<dbReference type="KEGG" id="ava:Ava_0706"/>
<dbReference type="eggNOG" id="COG0256">
    <property type="taxonomic scope" value="Bacteria"/>
</dbReference>
<dbReference type="HOGENOM" id="CLU_098841_0_1_3"/>
<dbReference type="Proteomes" id="UP000002533">
    <property type="component" value="Chromosome"/>
</dbReference>
<dbReference type="GO" id="GO:0022625">
    <property type="term" value="C:cytosolic large ribosomal subunit"/>
    <property type="evidence" value="ECO:0007669"/>
    <property type="project" value="TreeGrafter"/>
</dbReference>
<dbReference type="GO" id="GO:0008097">
    <property type="term" value="F:5S rRNA binding"/>
    <property type="evidence" value="ECO:0007669"/>
    <property type="project" value="TreeGrafter"/>
</dbReference>
<dbReference type="GO" id="GO:0003735">
    <property type="term" value="F:structural constituent of ribosome"/>
    <property type="evidence" value="ECO:0007669"/>
    <property type="project" value="InterPro"/>
</dbReference>
<dbReference type="GO" id="GO:0006412">
    <property type="term" value="P:translation"/>
    <property type="evidence" value="ECO:0007669"/>
    <property type="project" value="UniProtKB-UniRule"/>
</dbReference>
<dbReference type="CDD" id="cd00432">
    <property type="entry name" value="Ribosomal_L18_L5e"/>
    <property type="match status" value="1"/>
</dbReference>
<dbReference type="FunFam" id="3.30.420.100:FF:000001">
    <property type="entry name" value="50S ribosomal protein L18"/>
    <property type="match status" value="1"/>
</dbReference>
<dbReference type="Gene3D" id="3.30.420.100">
    <property type="match status" value="1"/>
</dbReference>
<dbReference type="HAMAP" id="MF_01337_B">
    <property type="entry name" value="Ribosomal_uL18_B"/>
    <property type="match status" value="1"/>
</dbReference>
<dbReference type="InterPro" id="IPR004389">
    <property type="entry name" value="Ribosomal_uL18_bac-type"/>
</dbReference>
<dbReference type="InterPro" id="IPR005484">
    <property type="entry name" value="Ribosomal_uL18_bac/euk"/>
</dbReference>
<dbReference type="NCBIfam" id="TIGR00060">
    <property type="entry name" value="L18_bact"/>
    <property type="match status" value="1"/>
</dbReference>
<dbReference type="PANTHER" id="PTHR12899">
    <property type="entry name" value="39S RIBOSOMAL PROTEIN L18, MITOCHONDRIAL"/>
    <property type="match status" value="1"/>
</dbReference>
<dbReference type="PANTHER" id="PTHR12899:SF3">
    <property type="entry name" value="LARGE RIBOSOMAL SUBUNIT PROTEIN UL18M"/>
    <property type="match status" value="1"/>
</dbReference>
<dbReference type="Pfam" id="PF00861">
    <property type="entry name" value="Ribosomal_L18p"/>
    <property type="match status" value="1"/>
</dbReference>
<dbReference type="SUPFAM" id="SSF53137">
    <property type="entry name" value="Translational machinery components"/>
    <property type="match status" value="1"/>
</dbReference>
<evidence type="ECO:0000255" key="1">
    <source>
        <dbReference type="HAMAP-Rule" id="MF_01337"/>
    </source>
</evidence>
<evidence type="ECO:0000256" key="2">
    <source>
        <dbReference type="SAM" id="MobiDB-lite"/>
    </source>
</evidence>
<evidence type="ECO:0000305" key="3"/>
<sequence length="120" mass="13333">MKLTRRESKQRRHRRVRGKVQGSPERPRLAVFRSNEHIYAQVIDDTQHHTLVSASTVEPEVKSSLASGANCEASSQIGKLIAVRSLEKGITKVVFDRGGNLYHGRIKALAEAAREAGLDF</sequence>
<gene>
    <name evidence="1" type="primary">rplR</name>
    <name evidence="1" type="synonym">rpl18</name>
    <name type="ordered locus">Ava_0706</name>
</gene>
<organism>
    <name type="scientific">Trichormus variabilis (strain ATCC 29413 / PCC 7937)</name>
    <name type="common">Anabaena variabilis</name>
    <dbReference type="NCBI Taxonomy" id="240292"/>
    <lineage>
        <taxon>Bacteria</taxon>
        <taxon>Bacillati</taxon>
        <taxon>Cyanobacteriota</taxon>
        <taxon>Cyanophyceae</taxon>
        <taxon>Nostocales</taxon>
        <taxon>Nostocaceae</taxon>
        <taxon>Trichormus</taxon>
    </lineage>
</organism>
<protein>
    <recommendedName>
        <fullName evidence="1">Large ribosomal subunit protein uL18</fullName>
    </recommendedName>
    <alternativeName>
        <fullName evidence="3">50S ribosomal protein L18</fullName>
    </alternativeName>
</protein>